<comment type="function">
    <text evidence="1">Phosphorolytic 3'-5' exoribonuclease that plays an important role in tRNA 3'-end maturation. Removes nucleotide residues following the 3'-CCA terminus of tRNAs; can also add nucleotides to the ends of RNA molecules by using nucleoside diphosphates as substrates, but this may not be physiologically important. Probably plays a role in initiation of 16S rRNA degradation (leading to ribosome degradation) during starvation.</text>
</comment>
<comment type="catalytic activity">
    <reaction evidence="1">
        <text>tRNA(n+1) + phosphate = tRNA(n) + a ribonucleoside 5'-diphosphate</text>
        <dbReference type="Rhea" id="RHEA:10628"/>
        <dbReference type="Rhea" id="RHEA-COMP:17343"/>
        <dbReference type="Rhea" id="RHEA-COMP:17344"/>
        <dbReference type="ChEBI" id="CHEBI:43474"/>
        <dbReference type="ChEBI" id="CHEBI:57930"/>
        <dbReference type="ChEBI" id="CHEBI:173114"/>
        <dbReference type="EC" id="2.7.7.56"/>
    </reaction>
</comment>
<comment type="subunit">
    <text evidence="1">Homohexameric ring arranged as a trimer of dimers.</text>
</comment>
<comment type="similarity">
    <text evidence="1">Belongs to the RNase PH family.</text>
</comment>
<gene>
    <name evidence="1" type="primary">rph</name>
    <name type="ordered locus">PP_5294</name>
</gene>
<dbReference type="EC" id="2.7.7.56" evidence="1"/>
<dbReference type="EMBL" id="AE015451">
    <property type="protein sequence ID" value="AAN70859.1"/>
    <property type="molecule type" value="Genomic_DNA"/>
</dbReference>
<dbReference type="RefSeq" id="NP_747395.1">
    <property type="nucleotide sequence ID" value="NC_002947.4"/>
</dbReference>
<dbReference type="RefSeq" id="WP_003253397.1">
    <property type="nucleotide sequence ID" value="NZ_CP169744.1"/>
</dbReference>
<dbReference type="SMR" id="Q88C89"/>
<dbReference type="STRING" id="160488.PP_5294"/>
<dbReference type="PaxDb" id="160488-PP_5294"/>
<dbReference type="GeneID" id="83683101"/>
<dbReference type="KEGG" id="ppu:PP_5294"/>
<dbReference type="PATRIC" id="fig|160488.4.peg.5646"/>
<dbReference type="eggNOG" id="COG0689">
    <property type="taxonomic scope" value="Bacteria"/>
</dbReference>
<dbReference type="HOGENOM" id="CLU_050858_0_0_6"/>
<dbReference type="OrthoDB" id="9802265at2"/>
<dbReference type="PhylomeDB" id="Q88C89"/>
<dbReference type="BioCyc" id="PPUT160488:G1G01-5651-MONOMER"/>
<dbReference type="Proteomes" id="UP000000556">
    <property type="component" value="Chromosome"/>
</dbReference>
<dbReference type="GO" id="GO:0000175">
    <property type="term" value="F:3'-5'-RNA exonuclease activity"/>
    <property type="evidence" value="ECO:0007669"/>
    <property type="project" value="UniProtKB-UniRule"/>
</dbReference>
<dbReference type="GO" id="GO:0000049">
    <property type="term" value="F:tRNA binding"/>
    <property type="evidence" value="ECO:0007669"/>
    <property type="project" value="UniProtKB-UniRule"/>
</dbReference>
<dbReference type="GO" id="GO:0009022">
    <property type="term" value="F:tRNA nucleotidyltransferase activity"/>
    <property type="evidence" value="ECO:0007669"/>
    <property type="project" value="UniProtKB-UniRule"/>
</dbReference>
<dbReference type="GO" id="GO:0016075">
    <property type="term" value="P:rRNA catabolic process"/>
    <property type="evidence" value="ECO:0007669"/>
    <property type="project" value="UniProtKB-UniRule"/>
</dbReference>
<dbReference type="GO" id="GO:0006364">
    <property type="term" value="P:rRNA processing"/>
    <property type="evidence" value="ECO:0007669"/>
    <property type="project" value="UniProtKB-KW"/>
</dbReference>
<dbReference type="GO" id="GO:0008033">
    <property type="term" value="P:tRNA processing"/>
    <property type="evidence" value="ECO:0007669"/>
    <property type="project" value="UniProtKB-UniRule"/>
</dbReference>
<dbReference type="CDD" id="cd11362">
    <property type="entry name" value="RNase_PH_bact"/>
    <property type="match status" value="1"/>
</dbReference>
<dbReference type="FunFam" id="3.30.230.70:FF:000003">
    <property type="entry name" value="Ribonuclease PH"/>
    <property type="match status" value="1"/>
</dbReference>
<dbReference type="Gene3D" id="3.30.230.70">
    <property type="entry name" value="GHMP Kinase, N-terminal domain"/>
    <property type="match status" value="1"/>
</dbReference>
<dbReference type="HAMAP" id="MF_00564">
    <property type="entry name" value="RNase_PH"/>
    <property type="match status" value="1"/>
</dbReference>
<dbReference type="InterPro" id="IPR001247">
    <property type="entry name" value="ExoRNase_PH_dom1"/>
</dbReference>
<dbReference type="InterPro" id="IPR015847">
    <property type="entry name" value="ExoRNase_PH_dom2"/>
</dbReference>
<dbReference type="InterPro" id="IPR036345">
    <property type="entry name" value="ExoRNase_PH_dom2_sf"/>
</dbReference>
<dbReference type="InterPro" id="IPR027408">
    <property type="entry name" value="PNPase/RNase_PH_dom_sf"/>
</dbReference>
<dbReference type="InterPro" id="IPR020568">
    <property type="entry name" value="Ribosomal_Su5_D2-typ_SF"/>
</dbReference>
<dbReference type="InterPro" id="IPR050080">
    <property type="entry name" value="RNase_PH"/>
</dbReference>
<dbReference type="InterPro" id="IPR002381">
    <property type="entry name" value="RNase_PH_bac-type"/>
</dbReference>
<dbReference type="InterPro" id="IPR018336">
    <property type="entry name" value="RNase_PH_CS"/>
</dbReference>
<dbReference type="NCBIfam" id="TIGR01966">
    <property type="entry name" value="RNasePH"/>
    <property type="match status" value="1"/>
</dbReference>
<dbReference type="PANTHER" id="PTHR11953">
    <property type="entry name" value="EXOSOME COMPLEX COMPONENT"/>
    <property type="match status" value="1"/>
</dbReference>
<dbReference type="PANTHER" id="PTHR11953:SF0">
    <property type="entry name" value="EXOSOME COMPLEX COMPONENT RRP41"/>
    <property type="match status" value="1"/>
</dbReference>
<dbReference type="Pfam" id="PF01138">
    <property type="entry name" value="RNase_PH"/>
    <property type="match status" value="1"/>
</dbReference>
<dbReference type="Pfam" id="PF03725">
    <property type="entry name" value="RNase_PH_C"/>
    <property type="match status" value="1"/>
</dbReference>
<dbReference type="SUPFAM" id="SSF55666">
    <property type="entry name" value="Ribonuclease PH domain 2-like"/>
    <property type="match status" value="1"/>
</dbReference>
<dbReference type="SUPFAM" id="SSF54211">
    <property type="entry name" value="Ribosomal protein S5 domain 2-like"/>
    <property type="match status" value="1"/>
</dbReference>
<dbReference type="PROSITE" id="PS01277">
    <property type="entry name" value="RIBONUCLEASE_PH"/>
    <property type="match status" value="1"/>
</dbReference>
<sequence length="240" mass="25723">MKRPSGRVADQLRSIRITRNYTKHAEGSVLVEFGDTKVICTVSVENGVPRFLKGQGQGWLTAEYGMLPRSTGERNQREASRGKQGGRTLEIQRLIGRSLRAALDMSKLGDITLYVDCDVIQADGGTRTASITGAMVALCDALAVIKKRGGLKGGNPLKHMIAAVSVGMYQGEAVLDLDYLEDSAAETDLNVVMTSAGGFIEVQGTAEGAPFQPEDFNAMLALAQKGMNEIFELQQAALAD</sequence>
<organism>
    <name type="scientific">Pseudomonas putida (strain ATCC 47054 / DSM 6125 / CFBP 8728 / NCIMB 11950 / KT2440)</name>
    <dbReference type="NCBI Taxonomy" id="160488"/>
    <lineage>
        <taxon>Bacteria</taxon>
        <taxon>Pseudomonadati</taxon>
        <taxon>Pseudomonadota</taxon>
        <taxon>Gammaproteobacteria</taxon>
        <taxon>Pseudomonadales</taxon>
        <taxon>Pseudomonadaceae</taxon>
        <taxon>Pseudomonas</taxon>
    </lineage>
</organism>
<accession>Q88C89</accession>
<feature type="chain" id="PRO_0000139925" description="Ribonuclease PH">
    <location>
        <begin position="1"/>
        <end position="240"/>
    </location>
</feature>
<feature type="binding site" evidence="1">
    <location>
        <position position="87"/>
    </location>
    <ligand>
        <name>phosphate</name>
        <dbReference type="ChEBI" id="CHEBI:43474"/>
        <note>substrate</note>
    </ligand>
</feature>
<feature type="binding site" evidence="1">
    <location>
        <begin position="125"/>
        <end position="127"/>
    </location>
    <ligand>
        <name>phosphate</name>
        <dbReference type="ChEBI" id="CHEBI:43474"/>
        <note>substrate</note>
    </ligand>
</feature>
<proteinExistence type="inferred from homology"/>
<evidence type="ECO:0000255" key="1">
    <source>
        <dbReference type="HAMAP-Rule" id="MF_00564"/>
    </source>
</evidence>
<keyword id="KW-0548">Nucleotidyltransferase</keyword>
<keyword id="KW-1185">Reference proteome</keyword>
<keyword id="KW-0694">RNA-binding</keyword>
<keyword id="KW-0698">rRNA processing</keyword>
<keyword id="KW-0808">Transferase</keyword>
<keyword id="KW-0819">tRNA processing</keyword>
<keyword id="KW-0820">tRNA-binding</keyword>
<protein>
    <recommendedName>
        <fullName evidence="1">Ribonuclease PH</fullName>
        <shortName evidence="1">RNase PH</shortName>
        <ecNumber evidence="1">2.7.7.56</ecNumber>
    </recommendedName>
    <alternativeName>
        <fullName evidence="1">tRNA nucleotidyltransferase</fullName>
    </alternativeName>
</protein>
<name>RNPH_PSEPK</name>
<reference key="1">
    <citation type="journal article" date="2002" name="Environ. Microbiol.">
        <title>Complete genome sequence and comparative analysis of the metabolically versatile Pseudomonas putida KT2440.</title>
        <authorList>
            <person name="Nelson K.E."/>
            <person name="Weinel C."/>
            <person name="Paulsen I.T."/>
            <person name="Dodson R.J."/>
            <person name="Hilbert H."/>
            <person name="Martins dos Santos V.A.P."/>
            <person name="Fouts D.E."/>
            <person name="Gill S.R."/>
            <person name="Pop M."/>
            <person name="Holmes M."/>
            <person name="Brinkac L.M."/>
            <person name="Beanan M.J."/>
            <person name="DeBoy R.T."/>
            <person name="Daugherty S.C."/>
            <person name="Kolonay J.F."/>
            <person name="Madupu R."/>
            <person name="Nelson W.C."/>
            <person name="White O."/>
            <person name="Peterson J.D."/>
            <person name="Khouri H.M."/>
            <person name="Hance I."/>
            <person name="Chris Lee P."/>
            <person name="Holtzapple E.K."/>
            <person name="Scanlan D."/>
            <person name="Tran K."/>
            <person name="Moazzez A."/>
            <person name="Utterback T.R."/>
            <person name="Rizzo M."/>
            <person name="Lee K."/>
            <person name="Kosack D."/>
            <person name="Moestl D."/>
            <person name="Wedler H."/>
            <person name="Lauber J."/>
            <person name="Stjepandic D."/>
            <person name="Hoheisel J."/>
            <person name="Straetz M."/>
            <person name="Heim S."/>
            <person name="Kiewitz C."/>
            <person name="Eisen J.A."/>
            <person name="Timmis K.N."/>
            <person name="Duesterhoeft A."/>
            <person name="Tuemmler B."/>
            <person name="Fraser C.M."/>
        </authorList>
    </citation>
    <scope>NUCLEOTIDE SEQUENCE [LARGE SCALE GENOMIC DNA]</scope>
    <source>
        <strain>ATCC 47054 / DSM 6125 / CFBP 8728 / NCIMB 11950 / KT2440</strain>
    </source>
</reference>